<proteinExistence type="inferred from homology"/>
<sequence>MSAPPRQKRLTPTTIAALKHQRPIVSLTAYTTPMARLMDAHCDLLLVGDSLGMVLYGLDTTVGVTLEMMIAHGQAVLRGVNRACVIIDMPFGSYQESREQAFRNAARIMKETGCDGIKLEGGTEMAETVAFLVERGIPVLGHVGLMPQQVNTSGGYRSKGHDEAEADKIRADATAIAKAGAFALVIEGTVEPLAREITQTLSVPTIGIGASPACDGQILVSDDMLGLFNDFKPRFVKHYAELAGVISKAVEDYATEVKARQFPGPEHTFQPRKS</sequence>
<reference key="1">
    <citation type="journal article" date="2009" name="J. Bacteriol.">
        <title>Genome sequences of three Agrobacterium biovars help elucidate the evolution of multichromosome genomes in bacteria.</title>
        <authorList>
            <person name="Slater S.C."/>
            <person name="Goldman B.S."/>
            <person name="Goodner B."/>
            <person name="Setubal J.C."/>
            <person name="Farrand S.K."/>
            <person name="Nester E.W."/>
            <person name="Burr T.J."/>
            <person name="Banta L."/>
            <person name="Dickerman A.W."/>
            <person name="Paulsen I."/>
            <person name="Otten L."/>
            <person name="Suen G."/>
            <person name="Welch R."/>
            <person name="Almeida N.F."/>
            <person name="Arnold F."/>
            <person name="Burton O.T."/>
            <person name="Du Z."/>
            <person name="Ewing A."/>
            <person name="Godsy E."/>
            <person name="Heisel S."/>
            <person name="Houmiel K.L."/>
            <person name="Jhaveri J."/>
            <person name="Lu J."/>
            <person name="Miller N.M."/>
            <person name="Norton S."/>
            <person name="Chen Q."/>
            <person name="Phoolcharoen W."/>
            <person name="Ohlin V."/>
            <person name="Ondrusek D."/>
            <person name="Pride N."/>
            <person name="Stricklin S.L."/>
            <person name="Sun J."/>
            <person name="Wheeler C."/>
            <person name="Wilson L."/>
            <person name="Zhu H."/>
            <person name="Wood D.W."/>
        </authorList>
    </citation>
    <scope>NUCLEOTIDE SEQUENCE [LARGE SCALE GENOMIC DNA]</scope>
    <source>
        <strain>ATCC BAA-846 / DSM 112012 / S4</strain>
    </source>
</reference>
<keyword id="KW-0963">Cytoplasm</keyword>
<keyword id="KW-0460">Magnesium</keyword>
<keyword id="KW-0479">Metal-binding</keyword>
<keyword id="KW-0566">Pantothenate biosynthesis</keyword>
<keyword id="KW-1185">Reference proteome</keyword>
<keyword id="KW-0808">Transferase</keyword>
<gene>
    <name evidence="1" type="primary">panB</name>
    <name type="ordered locus">Avi_2847</name>
</gene>
<organism>
    <name type="scientific">Allorhizobium ampelinum (strain ATCC BAA-846 / DSM 112012 / S4)</name>
    <name type="common">Agrobacterium vitis (strain S4)</name>
    <dbReference type="NCBI Taxonomy" id="311402"/>
    <lineage>
        <taxon>Bacteria</taxon>
        <taxon>Pseudomonadati</taxon>
        <taxon>Pseudomonadota</taxon>
        <taxon>Alphaproteobacteria</taxon>
        <taxon>Hyphomicrobiales</taxon>
        <taxon>Rhizobiaceae</taxon>
        <taxon>Rhizobium/Agrobacterium group</taxon>
        <taxon>Allorhizobium</taxon>
        <taxon>Allorhizobium ampelinum</taxon>
    </lineage>
</organism>
<feature type="chain" id="PRO_1000123364" description="3-methyl-2-oxobutanoate hydroxymethyltransferase">
    <location>
        <begin position="1"/>
        <end position="274"/>
    </location>
</feature>
<feature type="active site" description="Proton acceptor" evidence="1">
    <location>
        <position position="187"/>
    </location>
</feature>
<feature type="binding site" evidence="1">
    <location>
        <begin position="49"/>
        <end position="50"/>
    </location>
    <ligand>
        <name>3-methyl-2-oxobutanoate</name>
        <dbReference type="ChEBI" id="CHEBI:11851"/>
    </ligand>
</feature>
<feature type="binding site" evidence="1">
    <location>
        <position position="49"/>
    </location>
    <ligand>
        <name>Mg(2+)</name>
        <dbReference type="ChEBI" id="CHEBI:18420"/>
    </ligand>
</feature>
<feature type="binding site" evidence="1">
    <location>
        <position position="88"/>
    </location>
    <ligand>
        <name>3-methyl-2-oxobutanoate</name>
        <dbReference type="ChEBI" id="CHEBI:11851"/>
    </ligand>
</feature>
<feature type="binding site" evidence="1">
    <location>
        <position position="88"/>
    </location>
    <ligand>
        <name>Mg(2+)</name>
        <dbReference type="ChEBI" id="CHEBI:18420"/>
    </ligand>
</feature>
<feature type="binding site" evidence="1">
    <location>
        <position position="118"/>
    </location>
    <ligand>
        <name>3-methyl-2-oxobutanoate</name>
        <dbReference type="ChEBI" id="CHEBI:11851"/>
    </ligand>
</feature>
<feature type="binding site" evidence="1">
    <location>
        <position position="120"/>
    </location>
    <ligand>
        <name>Mg(2+)</name>
        <dbReference type="ChEBI" id="CHEBI:18420"/>
    </ligand>
</feature>
<name>PANB_ALLAM</name>
<evidence type="ECO:0000255" key="1">
    <source>
        <dbReference type="HAMAP-Rule" id="MF_00156"/>
    </source>
</evidence>
<dbReference type="EC" id="2.1.2.11" evidence="1"/>
<dbReference type="EMBL" id="CP000633">
    <property type="protein sequence ID" value="ACM37050.1"/>
    <property type="molecule type" value="Genomic_DNA"/>
</dbReference>
<dbReference type="RefSeq" id="WP_015916471.1">
    <property type="nucleotide sequence ID" value="NC_011989.1"/>
</dbReference>
<dbReference type="SMR" id="B9JXS3"/>
<dbReference type="STRING" id="311402.Avi_2847"/>
<dbReference type="KEGG" id="avi:Avi_2847"/>
<dbReference type="eggNOG" id="COG0413">
    <property type="taxonomic scope" value="Bacteria"/>
</dbReference>
<dbReference type="HOGENOM" id="CLU_036645_1_0_5"/>
<dbReference type="UniPathway" id="UPA00028">
    <property type="reaction ID" value="UER00003"/>
</dbReference>
<dbReference type="Proteomes" id="UP000001596">
    <property type="component" value="Chromosome 1"/>
</dbReference>
<dbReference type="GO" id="GO:0005737">
    <property type="term" value="C:cytoplasm"/>
    <property type="evidence" value="ECO:0007669"/>
    <property type="project" value="UniProtKB-SubCell"/>
</dbReference>
<dbReference type="GO" id="GO:0003864">
    <property type="term" value="F:3-methyl-2-oxobutanoate hydroxymethyltransferase activity"/>
    <property type="evidence" value="ECO:0007669"/>
    <property type="project" value="UniProtKB-UniRule"/>
</dbReference>
<dbReference type="GO" id="GO:0000287">
    <property type="term" value="F:magnesium ion binding"/>
    <property type="evidence" value="ECO:0007669"/>
    <property type="project" value="TreeGrafter"/>
</dbReference>
<dbReference type="GO" id="GO:0015940">
    <property type="term" value="P:pantothenate biosynthetic process"/>
    <property type="evidence" value="ECO:0007669"/>
    <property type="project" value="UniProtKB-UniRule"/>
</dbReference>
<dbReference type="CDD" id="cd06557">
    <property type="entry name" value="KPHMT-like"/>
    <property type="match status" value="1"/>
</dbReference>
<dbReference type="FunFam" id="3.20.20.60:FF:000003">
    <property type="entry name" value="3-methyl-2-oxobutanoate hydroxymethyltransferase"/>
    <property type="match status" value="1"/>
</dbReference>
<dbReference type="Gene3D" id="3.20.20.60">
    <property type="entry name" value="Phosphoenolpyruvate-binding domains"/>
    <property type="match status" value="1"/>
</dbReference>
<dbReference type="HAMAP" id="MF_00156">
    <property type="entry name" value="PanB"/>
    <property type="match status" value="1"/>
</dbReference>
<dbReference type="InterPro" id="IPR003700">
    <property type="entry name" value="Pantoate_hydroxy_MeTrfase"/>
</dbReference>
<dbReference type="InterPro" id="IPR015813">
    <property type="entry name" value="Pyrv/PenolPyrv_kinase-like_dom"/>
</dbReference>
<dbReference type="InterPro" id="IPR040442">
    <property type="entry name" value="Pyrv_kinase-like_dom_sf"/>
</dbReference>
<dbReference type="NCBIfam" id="TIGR00222">
    <property type="entry name" value="panB"/>
    <property type="match status" value="1"/>
</dbReference>
<dbReference type="NCBIfam" id="NF001452">
    <property type="entry name" value="PRK00311.1"/>
    <property type="match status" value="1"/>
</dbReference>
<dbReference type="PANTHER" id="PTHR20881">
    <property type="entry name" value="3-METHYL-2-OXOBUTANOATE HYDROXYMETHYLTRANSFERASE"/>
    <property type="match status" value="1"/>
</dbReference>
<dbReference type="PANTHER" id="PTHR20881:SF0">
    <property type="entry name" value="3-METHYL-2-OXOBUTANOATE HYDROXYMETHYLTRANSFERASE"/>
    <property type="match status" value="1"/>
</dbReference>
<dbReference type="Pfam" id="PF02548">
    <property type="entry name" value="Pantoate_transf"/>
    <property type="match status" value="1"/>
</dbReference>
<dbReference type="PIRSF" id="PIRSF000388">
    <property type="entry name" value="Pantoate_hydroxy_MeTrfase"/>
    <property type="match status" value="1"/>
</dbReference>
<dbReference type="SUPFAM" id="SSF51621">
    <property type="entry name" value="Phosphoenolpyruvate/pyruvate domain"/>
    <property type="match status" value="1"/>
</dbReference>
<protein>
    <recommendedName>
        <fullName evidence="1">3-methyl-2-oxobutanoate hydroxymethyltransferase</fullName>
        <ecNumber evidence="1">2.1.2.11</ecNumber>
    </recommendedName>
    <alternativeName>
        <fullName evidence="1">Ketopantoate hydroxymethyltransferase</fullName>
        <shortName evidence="1">KPHMT</shortName>
    </alternativeName>
</protein>
<accession>B9JXS3</accession>
<comment type="function">
    <text evidence="1">Catalyzes the reversible reaction in which hydroxymethyl group from 5,10-methylenetetrahydrofolate is transferred onto alpha-ketoisovalerate to form ketopantoate.</text>
</comment>
<comment type="catalytic activity">
    <reaction evidence="1">
        <text>3-methyl-2-oxobutanoate + (6R)-5,10-methylene-5,6,7,8-tetrahydrofolate + H2O = 2-dehydropantoate + (6S)-5,6,7,8-tetrahydrofolate</text>
        <dbReference type="Rhea" id="RHEA:11824"/>
        <dbReference type="ChEBI" id="CHEBI:11561"/>
        <dbReference type="ChEBI" id="CHEBI:11851"/>
        <dbReference type="ChEBI" id="CHEBI:15377"/>
        <dbReference type="ChEBI" id="CHEBI:15636"/>
        <dbReference type="ChEBI" id="CHEBI:57453"/>
        <dbReference type="EC" id="2.1.2.11"/>
    </reaction>
</comment>
<comment type="cofactor">
    <cofactor evidence="1">
        <name>Mg(2+)</name>
        <dbReference type="ChEBI" id="CHEBI:18420"/>
    </cofactor>
    <text evidence="1">Binds 1 Mg(2+) ion per subunit.</text>
</comment>
<comment type="pathway">
    <text evidence="1">Cofactor biosynthesis; (R)-pantothenate biosynthesis; (R)-pantoate from 3-methyl-2-oxobutanoate: step 1/2.</text>
</comment>
<comment type="subunit">
    <text evidence="1">Homodecamer; pentamer of dimers.</text>
</comment>
<comment type="subcellular location">
    <subcellularLocation>
        <location evidence="1">Cytoplasm</location>
    </subcellularLocation>
</comment>
<comment type="similarity">
    <text evidence="1">Belongs to the PanB family.</text>
</comment>